<name>MYP0_MOUSE</name>
<reference key="1">
    <citation type="journal article" date="1991" name="Genomics">
        <title>DNA sequence, genomic organization, and chromosomal localization of the mouse peripheral myelin protein zero gene: identification of polymorphic alleles.</title>
        <authorList>
            <person name="You K.H."/>
            <person name="Hsieh C.L."/>
            <person name="Hayes C."/>
            <person name="Stahl N."/>
            <person name="Francke U."/>
            <person name="Popko B."/>
        </authorList>
    </citation>
    <scope>NUCLEOTIDE SEQUENCE [GENOMIC DNA]</scope>
</reference>
<reference key="2">
    <citation type="journal article" date="2005" name="Science">
        <title>The transcriptional landscape of the mammalian genome.</title>
        <authorList>
            <person name="Carninci P."/>
            <person name="Kasukawa T."/>
            <person name="Katayama S."/>
            <person name="Gough J."/>
            <person name="Frith M.C."/>
            <person name="Maeda N."/>
            <person name="Oyama R."/>
            <person name="Ravasi T."/>
            <person name="Lenhard B."/>
            <person name="Wells C."/>
            <person name="Kodzius R."/>
            <person name="Shimokawa K."/>
            <person name="Bajic V.B."/>
            <person name="Brenner S.E."/>
            <person name="Batalov S."/>
            <person name="Forrest A.R."/>
            <person name="Zavolan M."/>
            <person name="Davis M.J."/>
            <person name="Wilming L.G."/>
            <person name="Aidinis V."/>
            <person name="Allen J.E."/>
            <person name="Ambesi-Impiombato A."/>
            <person name="Apweiler R."/>
            <person name="Aturaliya R.N."/>
            <person name="Bailey T.L."/>
            <person name="Bansal M."/>
            <person name="Baxter L."/>
            <person name="Beisel K.W."/>
            <person name="Bersano T."/>
            <person name="Bono H."/>
            <person name="Chalk A.M."/>
            <person name="Chiu K.P."/>
            <person name="Choudhary V."/>
            <person name="Christoffels A."/>
            <person name="Clutterbuck D.R."/>
            <person name="Crowe M.L."/>
            <person name="Dalla E."/>
            <person name="Dalrymple B.P."/>
            <person name="de Bono B."/>
            <person name="Della Gatta G."/>
            <person name="di Bernardo D."/>
            <person name="Down T."/>
            <person name="Engstrom P."/>
            <person name="Fagiolini M."/>
            <person name="Faulkner G."/>
            <person name="Fletcher C.F."/>
            <person name="Fukushima T."/>
            <person name="Furuno M."/>
            <person name="Futaki S."/>
            <person name="Gariboldi M."/>
            <person name="Georgii-Hemming P."/>
            <person name="Gingeras T.R."/>
            <person name="Gojobori T."/>
            <person name="Green R.E."/>
            <person name="Gustincich S."/>
            <person name="Harbers M."/>
            <person name="Hayashi Y."/>
            <person name="Hensch T.K."/>
            <person name="Hirokawa N."/>
            <person name="Hill D."/>
            <person name="Huminiecki L."/>
            <person name="Iacono M."/>
            <person name="Ikeo K."/>
            <person name="Iwama A."/>
            <person name="Ishikawa T."/>
            <person name="Jakt M."/>
            <person name="Kanapin A."/>
            <person name="Katoh M."/>
            <person name="Kawasawa Y."/>
            <person name="Kelso J."/>
            <person name="Kitamura H."/>
            <person name="Kitano H."/>
            <person name="Kollias G."/>
            <person name="Krishnan S.P."/>
            <person name="Kruger A."/>
            <person name="Kummerfeld S.K."/>
            <person name="Kurochkin I.V."/>
            <person name="Lareau L.F."/>
            <person name="Lazarevic D."/>
            <person name="Lipovich L."/>
            <person name="Liu J."/>
            <person name="Liuni S."/>
            <person name="McWilliam S."/>
            <person name="Madan Babu M."/>
            <person name="Madera M."/>
            <person name="Marchionni L."/>
            <person name="Matsuda H."/>
            <person name="Matsuzawa S."/>
            <person name="Miki H."/>
            <person name="Mignone F."/>
            <person name="Miyake S."/>
            <person name="Morris K."/>
            <person name="Mottagui-Tabar S."/>
            <person name="Mulder N."/>
            <person name="Nakano N."/>
            <person name="Nakauchi H."/>
            <person name="Ng P."/>
            <person name="Nilsson R."/>
            <person name="Nishiguchi S."/>
            <person name="Nishikawa S."/>
            <person name="Nori F."/>
            <person name="Ohara O."/>
            <person name="Okazaki Y."/>
            <person name="Orlando V."/>
            <person name="Pang K.C."/>
            <person name="Pavan W.J."/>
            <person name="Pavesi G."/>
            <person name="Pesole G."/>
            <person name="Petrovsky N."/>
            <person name="Piazza S."/>
            <person name="Reed J."/>
            <person name="Reid J.F."/>
            <person name="Ring B.Z."/>
            <person name="Ringwald M."/>
            <person name="Rost B."/>
            <person name="Ruan Y."/>
            <person name="Salzberg S.L."/>
            <person name="Sandelin A."/>
            <person name="Schneider C."/>
            <person name="Schoenbach C."/>
            <person name="Sekiguchi K."/>
            <person name="Semple C.A."/>
            <person name="Seno S."/>
            <person name="Sessa L."/>
            <person name="Sheng Y."/>
            <person name="Shibata Y."/>
            <person name="Shimada H."/>
            <person name="Shimada K."/>
            <person name="Silva D."/>
            <person name="Sinclair B."/>
            <person name="Sperling S."/>
            <person name="Stupka E."/>
            <person name="Sugiura K."/>
            <person name="Sultana R."/>
            <person name="Takenaka Y."/>
            <person name="Taki K."/>
            <person name="Tammoja K."/>
            <person name="Tan S.L."/>
            <person name="Tang S."/>
            <person name="Taylor M.S."/>
            <person name="Tegner J."/>
            <person name="Teichmann S.A."/>
            <person name="Ueda H.R."/>
            <person name="van Nimwegen E."/>
            <person name="Verardo R."/>
            <person name="Wei C.L."/>
            <person name="Yagi K."/>
            <person name="Yamanishi H."/>
            <person name="Zabarovsky E."/>
            <person name="Zhu S."/>
            <person name="Zimmer A."/>
            <person name="Hide W."/>
            <person name="Bult C."/>
            <person name="Grimmond S.M."/>
            <person name="Teasdale R.D."/>
            <person name="Liu E.T."/>
            <person name="Brusic V."/>
            <person name="Quackenbush J."/>
            <person name="Wahlestedt C."/>
            <person name="Mattick J.S."/>
            <person name="Hume D.A."/>
            <person name="Kai C."/>
            <person name="Sasaki D."/>
            <person name="Tomaru Y."/>
            <person name="Fukuda S."/>
            <person name="Kanamori-Katayama M."/>
            <person name="Suzuki M."/>
            <person name="Aoki J."/>
            <person name="Arakawa T."/>
            <person name="Iida J."/>
            <person name="Imamura K."/>
            <person name="Itoh M."/>
            <person name="Kato T."/>
            <person name="Kawaji H."/>
            <person name="Kawagashira N."/>
            <person name="Kawashima T."/>
            <person name="Kojima M."/>
            <person name="Kondo S."/>
            <person name="Konno H."/>
            <person name="Nakano K."/>
            <person name="Ninomiya N."/>
            <person name="Nishio T."/>
            <person name="Okada M."/>
            <person name="Plessy C."/>
            <person name="Shibata K."/>
            <person name="Shiraki T."/>
            <person name="Suzuki S."/>
            <person name="Tagami M."/>
            <person name="Waki K."/>
            <person name="Watahiki A."/>
            <person name="Okamura-Oho Y."/>
            <person name="Suzuki H."/>
            <person name="Kawai J."/>
            <person name="Hayashizaki Y."/>
        </authorList>
    </citation>
    <scope>NUCLEOTIDE SEQUENCE [LARGE SCALE MRNA]</scope>
    <source>
        <strain>C57BL/6J</strain>
        <strain>NOD</strain>
        <tissue>Inner ear</tissue>
    </source>
</reference>
<reference key="3">
    <citation type="submission" date="2005-09" db="EMBL/GenBank/DDBJ databases">
        <authorList>
            <person name="Mural R.J."/>
            <person name="Adams M.D."/>
            <person name="Myers E.W."/>
            <person name="Smith H.O."/>
            <person name="Venter J.C."/>
        </authorList>
    </citation>
    <scope>NUCLEOTIDE SEQUENCE [LARGE SCALE GENOMIC DNA]</scope>
</reference>
<reference key="4">
    <citation type="journal article" date="2004" name="Genome Res.">
        <title>The status, quality, and expansion of the NIH full-length cDNA project: the Mammalian Gene Collection (MGC).</title>
        <authorList>
            <consortium name="The MGC Project Team"/>
        </authorList>
    </citation>
    <scope>NUCLEOTIDE SEQUENCE [LARGE SCALE MRNA]</scope>
    <source>
        <tissue>Brain</tissue>
    </source>
</reference>
<reference key="5">
    <citation type="journal article" date="1995" name="J. Neurochem.">
        <title>Myelin P0 glycoprotein: identification of the site phosphorylated in vitro and in vivo by endogenous protein kinases.</title>
        <authorList>
            <person name="Hilmi S."/>
            <person name="Fournier M."/>
            <person name="Valeins H."/>
            <person name="Gandar J.C."/>
            <person name="Bonnet J."/>
        </authorList>
    </citation>
    <scope>PHOSPHORYLATION AT SER-226; SER-228; SER-233; SER-237 AND SER-243</scope>
</reference>
<reference key="6">
    <citation type="journal article" date="1999" name="Development">
        <title>Krox-20 controls SCIP expression, cell cycle exit and susceptibility to apoptosis in developing myelinating Schwann cells.</title>
        <authorList>
            <person name="Zorick T.S."/>
            <person name="Syroid D.E."/>
            <person name="Brown A."/>
            <person name="Gridley T."/>
            <person name="Lemke G."/>
        </authorList>
    </citation>
    <scope>DEVELOPMENTAL STAGE</scope>
</reference>
<organism>
    <name type="scientific">Mus musculus</name>
    <name type="common">Mouse</name>
    <dbReference type="NCBI Taxonomy" id="10090"/>
    <lineage>
        <taxon>Eukaryota</taxon>
        <taxon>Metazoa</taxon>
        <taxon>Chordata</taxon>
        <taxon>Craniata</taxon>
        <taxon>Vertebrata</taxon>
        <taxon>Euteleostomi</taxon>
        <taxon>Mammalia</taxon>
        <taxon>Eutheria</taxon>
        <taxon>Euarchontoglires</taxon>
        <taxon>Glires</taxon>
        <taxon>Rodentia</taxon>
        <taxon>Myomorpha</taxon>
        <taxon>Muroidea</taxon>
        <taxon>Muridae</taxon>
        <taxon>Murinae</taxon>
        <taxon>Mus</taxon>
        <taxon>Mus</taxon>
    </lineage>
</organism>
<sequence length="248" mass="27622">MAPGAPSSSPSPILAALLFSSLVLSPALAIVVYTDREIYGAVGSQVTLHCSFWSSEWVSDDISFTWRYQPEGGRDAISIFHYAKGQPYIDEVGAFKERIQWVGDPRWKDGSIVIHNLDYSDNGTFTCDVKNPPDIVGKTSQVTLYVFEKVPTRYGVVLGAVIGGILGVVLLLLLLFYLIRYCWLRRQAALQRRLSAMEKGRFHKSSKDSSKRGRQTPVLYAMLDHSRSTKAASEKKSKGLGESRKDKK</sequence>
<accession>P27573</accession>
<accession>Q542C9</accession>
<feature type="signal peptide" evidence="1">
    <location>
        <begin position="1"/>
        <end position="29"/>
    </location>
</feature>
<feature type="chain" id="PRO_0000019301" description="Myelin protein P0">
    <location>
        <begin position="30"/>
        <end position="248"/>
    </location>
</feature>
<feature type="topological domain" description="Extracellular" evidence="1">
    <location>
        <begin position="30"/>
        <end position="153"/>
    </location>
</feature>
<feature type="transmembrane region" description="Helical" evidence="1">
    <location>
        <begin position="154"/>
        <end position="179"/>
    </location>
</feature>
<feature type="topological domain" description="Cytoplasmic" evidence="1">
    <location>
        <begin position="180"/>
        <end position="248"/>
    </location>
</feature>
<feature type="domain" description="Ig-like V-type">
    <location>
        <begin position="30"/>
        <end position="143"/>
    </location>
</feature>
<feature type="region of interest" description="Disordered" evidence="6">
    <location>
        <begin position="222"/>
        <end position="248"/>
    </location>
</feature>
<feature type="compositionally biased region" description="Basic and acidic residues" evidence="6">
    <location>
        <begin position="224"/>
        <end position="248"/>
    </location>
</feature>
<feature type="modified residue" description="Phosphoserine; by PKC" evidence="2">
    <location>
        <position position="210"/>
    </location>
</feature>
<feature type="modified residue" description="Phosphoserine" evidence="8">
    <location>
        <position position="226"/>
    </location>
</feature>
<feature type="modified residue" description="Phosphoserine" evidence="8">
    <location>
        <position position="228"/>
    </location>
</feature>
<feature type="modified residue" description="Phosphoserine; by PKC" evidence="2">
    <location>
        <position position="233"/>
    </location>
</feature>
<feature type="modified residue" description="Phosphoserine" evidence="8">
    <location>
        <position position="237"/>
    </location>
</feature>
<feature type="modified residue" description="Phosphoserine" evidence="8">
    <location>
        <position position="243"/>
    </location>
</feature>
<feature type="glycosylation site" description="N-linked (GlcNAc...) (complex) asparagine" evidence="4">
    <location>
        <position position="122"/>
    </location>
</feature>
<feature type="disulfide bond" evidence="5">
    <location>
        <begin position="50"/>
        <end position="127"/>
    </location>
</feature>
<protein>
    <recommendedName>
        <fullName>Myelin protein P0</fullName>
    </recommendedName>
    <alternativeName>
        <fullName>Myelin peripheral protein</fullName>
        <shortName>MPP</shortName>
    </alternativeName>
    <alternativeName>
        <fullName>Myelin protein zero</fullName>
    </alternativeName>
</protein>
<evidence type="ECO:0000250" key="1"/>
<evidence type="ECO:0000250" key="2">
    <source>
        <dbReference type="UniProtKB" id="P10522"/>
    </source>
</evidence>
<evidence type="ECO:0000250" key="3">
    <source>
        <dbReference type="UniProtKB" id="P25189"/>
    </source>
</evidence>
<evidence type="ECO:0000255" key="4"/>
<evidence type="ECO:0000255" key="5">
    <source>
        <dbReference type="PROSITE-ProRule" id="PRU00114"/>
    </source>
</evidence>
<evidence type="ECO:0000256" key="6">
    <source>
        <dbReference type="SAM" id="MobiDB-lite"/>
    </source>
</evidence>
<evidence type="ECO:0000269" key="7">
    <source>
    </source>
</evidence>
<evidence type="ECO:0000269" key="8">
    <source>
    </source>
</evidence>
<evidence type="ECO:0000305" key="9"/>
<dbReference type="EMBL" id="M62860">
    <property type="protein sequence ID" value="AAA39867.1"/>
    <property type="molecule type" value="Genomic_DNA"/>
</dbReference>
<dbReference type="EMBL" id="M62857">
    <property type="protein sequence ID" value="AAA39867.1"/>
    <property type="status" value="JOINED"/>
    <property type="molecule type" value="Genomic_DNA"/>
</dbReference>
<dbReference type="EMBL" id="M62858">
    <property type="protein sequence ID" value="AAA39867.1"/>
    <property type="status" value="JOINED"/>
    <property type="molecule type" value="Genomic_DNA"/>
</dbReference>
<dbReference type="EMBL" id="M62859">
    <property type="protein sequence ID" value="AAA39867.1"/>
    <property type="status" value="JOINED"/>
    <property type="molecule type" value="Genomic_DNA"/>
</dbReference>
<dbReference type="EMBL" id="AK089180">
    <property type="protein sequence ID" value="BAC40781.1"/>
    <property type="molecule type" value="mRNA"/>
</dbReference>
<dbReference type="EMBL" id="AK157960">
    <property type="protein sequence ID" value="BAE34285.1"/>
    <property type="molecule type" value="mRNA"/>
</dbReference>
<dbReference type="EMBL" id="CH466520">
    <property type="protein sequence ID" value="EDL39129.1"/>
    <property type="molecule type" value="Genomic_DNA"/>
</dbReference>
<dbReference type="EMBL" id="CH466520">
    <property type="protein sequence ID" value="EDL39131.1"/>
    <property type="molecule type" value="Genomic_DNA"/>
</dbReference>
<dbReference type="EMBL" id="BC139139">
    <property type="protein sequence ID" value="AAI39140.1"/>
    <property type="molecule type" value="mRNA"/>
</dbReference>
<dbReference type="EMBL" id="BC141226">
    <property type="protein sequence ID" value="AAI41227.1"/>
    <property type="molecule type" value="mRNA"/>
</dbReference>
<dbReference type="CCDS" id="CCDS15479.1"/>
<dbReference type="PIR" id="A54662">
    <property type="entry name" value="A54662"/>
</dbReference>
<dbReference type="RefSeq" id="NP_001302428.1">
    <property type="nucleotide sequence ID" value="NM_001315499.1"/>
</dbReference>
<dbReference type="RefSeq" id="NP_001302429.1">
    <property type="nucleotide sequence ID" value="NM_001315500.1"/>
</dbReference>
<dbReference type="RefSeq" id="NP_032649.2">
    <property type="nucleotide sequence ID" value="NM_008623.5"/>
</dbReference>
<dbReference type="SMR" id="P27573"/>
<dbReference type="BioGRID" id="201482">
    <property type="interactions" value="1"/>
</dbReference>
<dbReference type="DIP" id="DIP-51664N"/>
<dbReference type="FunCoup" id="P27573">
    <property type="interactions" value="552"/>
</dbReference>
<dbReference type="IntAct" id="P27573">
    <property type="interactions" value="2"/>
</dbReference>
<dbReference type="STRING" id="10090.ENSMUSP00000066701"/>
<dbReference type="GlyCosmos" id="P27573">
    <property type="glycosylation" value="1 site, No reported glycans"/>
</dbReference>
<dbReference type="GlyGen" id="P27573">
    <property type="glycosylation" value="2 sites, 1 N-linked glycan (1 site), 1 O-linked glycan (1 site)"/>
</dbReference>
<dbReference type="iPTMnet" id="P27573"/>
<dbReference type="PhosphoSitePlus" id="P27573"/>
<dbReference type="jPOST" id="P27573"/>
<dbReference type="PaxDb" id="10090-ENSMUSP00000066701"/>
<dbReference type="ProteomicsDB" id="287537"/>
<dbReference type="ABCD" id="P27573">
    <property type="antibodies" value="16 sequenced antibodies"/>
</dbReference>
<dbReference type="DNASU" id="17528"/>
<dbReference type="GeneID" id="17528"/>
<dbReference type="KEGG" id="mmu:17528"/>
<dbReference type="AGR" id="MGI:103177"/>
<dbReference type="CTD" id="4359"/>
<dbReference type="MGI" id="MGI:103177">
    <property type="gene designation" value="Mpz"/>
</dbReference>
<dbReference type="eggNOG" id="ENOG502QVJ0">
    <property type="taxonomic scope" value="Eukaryota"/>
</dbReference>
<dbReference type="InParanoid" id="P27573"/>
<dbReference type="OrthoDB" id="9941287at2759"/>
<dbReference type="PhylomeDB" id="P27573"/>
<dbReference type="BioGRID-ORCS" id="17528">
    <property type="hits" value="1 hit in 77 CRISPR screens"/>
</dbReference>
<dbReference type="ChiTaRS" id="Mpz">
    <property type="organism name" value="mouse"/>
</dbReference>
<dbReference type="PRO" id="PR:P27573"/>
<dbReference type="Proteomes" id="UP000000589">
    <property type="component" value="Unplaced"/>
</dbReference>
<dbReference type="RNAct" id="P27573">
    <property type="molecule type" value="protein"/>
</dbReference>
<dbReference type="GO" id="GO:0005886">
    <property type="term" value="C:plasma membrane"/>
    <property type="evidence" value="ECO:0000250"/>
    <property type="project" value="UniProtKB"/>
</dbReference>
<dbReference type="GO" id="GO:0098743">
    <property type="term" value="P:cell aggregation"/>
    <property type="evidence" value="ECO:0000250"/>
    <property type="project" value="UniProtKB"/>
</dbReference>
<dbReference type="GO" id="GO:0098742">
    <property type="term" value="P:cell-cell adhesion via plasma-membrane adhesion molecules"/>
    <property type="evidence" value="ECO:0000250"/>
    <property type="project" value="UniProtKB"/>
</dbReference>
<dbReference type="GO" id="GO:0045217">
    <property type="term" value="P:cell-cell junction maintenance"/>
    <property type="evidence" value="ECO:0000315"/>
    <property type="project" value="MGI"/>
</dbReference>
<dbReference type="GO" id="GO:0042552">
    <property type="term" value="P:myelination"/>
    <property type="evidence" value="ECO:0000315"/>
    <property type="project" value="MGI"/>
</dbReference>
<dbReference type="CDD" id="cd05879">
    <property type="entry name" value="IgV_P0"/>
    <property type="match status" value="1"/>
</dbReference>
<dbReference type="FunFam" id="2.60.40.10:FF:000193">
    <property type="entry name" value="Myelin protein zero-like 1 like"/>
    <property type="match status" value="1"/>
</dbReference>
<dbReference type="Gene3D" id="2.60.40.10">
    <property type="entry name" value="Immunoglobulins"/>
    <property type="match status" value="1"/>
</dbReference>
<dbReference type="InterPro" id="IPR007110">
    <property type="entry name" value="Ig-like_dom"/>
</dbReference>
<dbReference type="InterPro" id="IPR036179">
    <property type="entry name" value="Ig-like_dom_sf"/>
</dbReference>
<dbReference type="InterPro" id="IPR013783">
    <property type="entry name" value="Ig-like_fold"/>
</dbReference>
<dbReference type="InterPro" id="IPR003599">
    <property type="entry name" value="Ig_sub"/>
</dbReference>
<dbReference type="InterPro" id="IPR013106">
    <property type="entry name" value="Ig_V-set"/>
</dbReference>
<dbReference type="InterPro" id="IPR000920">
    <property type="entry name" value="Myelin_P0-rel"/>
</dbReference>
<dbReference type="InterPro" id="IPR019738">
    <property type="entry name" value="Myelin_P0_CS"/>
</dbReference>
<dbReference type="InterPro" id="IPR047014">
    <property type="entry name" value="Myelin_P0_Ig-like"/>
</dbReference>
<dbReference type="InterPro" id="IPR019566">
    <property type="entry name" value="MYP0_C"/>
</dbReference>
<dbReference type="PANTHER" id="PTHR13869">
    <property type="entry name" value="MYELIN P0 RELATED"/>
    <property type="match status" value="1"/>
</dbReference>
<dbReference type="PANTHER" id="PTHR13869:SF7">
    <property type="entry name" value="MYELIN PROTEIN P0"/>
    <property type="match status" value="1"/>
</dbReference>
<dbReference type="Pfam" id="PF10570">
    <property type="entry name" value="Myelin-PO_C"/>
    <property type="match status" value="1"/>
</dbReference>
<dbReference type="Pfam" id="PF07686">
    <property type="entry name" value="V-set"/>
    <property type="match status" value="1"/>
</dbReference>
<dbReference type="PRINTS" id="PR00213">
    <property type="entry name" value="MYELINP0"/>
</dbReference>
<dbReference type="SMART" id="SM00409">
    <property type="entry name" value="IG"/>
    <property type="match status" value="1"/>
</dbReference>
<dbReference type="SMART" id="SM00406">
    <property type="entry name" value="IGv"/>
    <property type="match status" value="1"/>
</dbReference>
<dbReference type="SUPFAM" id="SSF48726">
    <property type="entry name" value="Immunoglobulin"/>
    <property type="match status" value="1"/>
</dbReference>
<dbReference type="PROSITE" id="PS50835">
    <property type="entry name" value="IG_LIKE"/>
    <property type="match status" value="1"/>
</dbReference>
<dbReference type="PROSITE" id="PS00568">
    <property type="entry name" value="MYELIN_P0"/>
    <property type="match status" value="1"/>
</dbReference>
<proteinExistence type="evidence at protein level"/>
<keyword id="KW-1003">Cell membrane</keyword>
<keyword id="KW-1015">Disulfide bond</keyword>
<keyword id="KW-0325">Glycoprotein</keyword>
<keyword id="KW-0393">Immunoglobulin domain</keyword>
<keyword id="KW-0472">Membrane</keyword>
<keyword id="KW-0597">Phosphoprotein</keyword>
<keyword id="KW-1185">Reference proteome</keyword>
<keyword id="KW-0732">Signal</keyword>
<keyword id="KW-0812">Transmembrane</keyword>
<keyword id="KW-1133">Transmembrane helix</keyword>
<comment type="function">
    <text evidence="3">Is an adhesion molecule necessary for normal myelination in the peripheral nervous system. It mediates adhesion between adjacent myelin wraps and ultimately drives myelin compaction.</text>
</comment>
<comment type="subunit">
    <text evidence="1">Homodimer and homotetramer.</text>
</comment>
<comment type="interaction">
    <interactant intactId="EBI-1634589">
        <id>P27573</id>
    </interactant>
    <interactant intactId="EBI-1633915">
        <id>Q08460</id>
        <label>Kcnma1</label>
    </interactant>
    <organismsDiffer>false</organismsDiffer>
    <experiments>4</experiments>
</comment>
<comment type="subcellular location">
    <subcellularLocation>
        <location evidence="3">Cell membrane</location>
        <topology evidence="3">Single-pass type I membrane protein</topology>
    </subcellularLocation>
</comment>
<comment type="tissue specificity">
    <text>Found only in peripheral nervous system Schwann cells.</text>
</comment>
<comment type="developmental stage">
    <text evidence="7">Expressed in the sciatic nerves at postnatal days P6 to P12.</text>
</comment>
<comment type="PTM">
    <text evidence="1">N-glycosylated; contains sulfate-substituted glycan.</text>
</comment>
<comment type="similarity">
    <text evidence="9">Belongs to the myelin P0 protein family.</text>
</comment>
<gene>
    <name type="primary">Mpz</name>
    <name type="synonym">P0</name>
</gene>